<protein>
    <recommendedName>
        <fullName evidence="1">Phosphate acyltransferase</fullName>
        <ecNumber evidence="1">2.3.1.274</ecNumber>
    </recommendedName>
    <alternativeName>
        <fullName evidence="1">Acyl-ACP phosphotransacylase</fullName>
    </alternativeName>
    <alternativeName>
        <fullName evidence="1">Acyl-[acyl-carrier-protein]--phosphate acyltransferase</fullName>
    </alternativeName>
    <alternativeName>
        <fullName evidence="1">Phosphate-acyl-ACP acyltransferase</fullName>
    </alternativeName>
</protein>
<organism>
    <name type="scientific">Leptospira interrogans serogroup Icterohaemorrhagiae serovar Lai (strain 56601)</name>
    <dbReference type="NCBI Taxonomy" id="189518"/>
    <lineage>
        <taxon>Bacteria</taxon>
        <taxon>Pseudomonadati</taxon>
        <taxon>Spirochaetota</taxon>
        <taxon>Spirochaetia</taxon>
        <taxon>Leptospirales</taxon>
        <taxon>Leptospiraceae</taxon>
        <taxon>Leptospira</taxon>
    </lineage>
</organism>
<feature type="chain" id="PRO_0000189897" description="Phosphate acyltransferase">
    <location>
        <begin position="1"/>
        <end position="335"/>
    </location>
</feature>
<dbReference type="EC" id="2.3.1.274" evidence="1"/>
<dbReference type="EMBL" id="AE010300">
    <property type="protein sequence ID" value="AAN48463.1"/>
    <property type="molecule type" value="Genomic_DNA"/>
</dbReference>
<dbReference type="RefSeq" id="NP_711445.1">
    <property type="nucleotide sequence ID" value="NC_004342.2"/>
</dbReference>
<dbReference type="RefSeq" id="WP_000990052.1">
    <property type="nucleotide sequence ID" value="NC_004342.2"/>
</dbReference>
<dbReference type="SMR" id="Q8F6N9"/>
<dbReference type="FunCoup" id="Q8F6N9">
    <property type="interactions" value="254"/>
</dbReference>
<dbReference type="STRING" id="189518.LA_1264"/>
<dbReference type="PaxDb" id="189518-LA_1264"/>
<dbReference type="EnsemblBacteria" id="AAN48463">
    <property type="protein sequence ID" value="AAN48463"/>
    <property type="gene ID" value="LA_1264"/>
</dbReference>
<dbReference type="GeneID" id="61142319"/>
<dbReference type="KEGG" id="lil:LA_1264"/>
<dbReference type="PATRIC" id="fig|189518.3.peg.1265"/>
<dbReference type="HOGENOM" id="CLU_039379_1_1_12"/>
<dbReference type="InParanoid" id="Q8F6N9"/>
<dbReference type="OrthoDB" id="9806408at2"/>
<dbReference type="UniPathway" id="UPA00085"/>
<dbReference type="Proteomes" id="UP000001408">
    <property type="component" value="Chromosome I"/>
</dbReference>
<dbReference type="GO" id="GO:0005737">
    <property type="term" value="C:cytoplasm"/>
    <property type="evidence" value="ECO:0007669"/>
    <property type="project" value="UniProtKB-SubCell"/>
</dbReference>
<dbReference type="GO" id="GO:0043811">
    <property type="term" value="F:phosphate:acyl-[acyl carrier protein] acyltransferase activity"/>
    <property type="evidence" value="ECO:0007669"/>
    <property type="project" value="UniProtKB-UniRule"/>
</dbReference>
<dbReference type="GO" id="GO:0006633">
    <property type="term" value="P:fatty acid biosynthetic process"/>
    <property type="evidence" value="ECO:0007669"/>
    <property type="project" value="UniProtKB-UniRule"/>
</dbReference>
<dbReference type="GO" id="GO:0008654">
    <property type="term" value="P:phospholipid biosynthetic process"/>
    <property type="evidence" value="ECO:0007669"/>
    <property type="project" value="UniProtKB-KW"/>
</dbReference>
<dbReference type="Gene3D" id="3.40.718.10">
    <property type="entry name" value="Isopropylmalate Dehydrogenase"/>
    <property type="match status" value="1"/>
</dbReference>
<dbReference type="HAMAP" id="MF_00019">
    <property type="entry name" value="PlsX"/>
    <property type="match status" value="1"/>
</dbReference>
<dbReference type="InterPro" id="IPR003664">
    <property type="entry name" value="FA_synthesis"/>
</dbReference>
<dbReference type="InterPro" id="IPR012281">
    <property type="entry name" value="Phospholipid_synth_PlsX-like"/>
</dbReference>
<dbReference type="NCBIfam" id="TIGR00182">
    <property type="entry name" value="plsX"/>
    <property type="match status" value="1"/>
</dbReference>
<dbReference type="PANTHER" id="PTHR30100">
    <property type="entry name" value="FATTY ACID/PHOSPHOLIPID SYNTHESIS PROTEIN PLSX"/>
    <property type="match status" value="1"/>
</dbReference>
<dbReference type="PANTHER" id="PTHR30100:SF1">
    <property type="entry name" value="PHOSPHATE ACYLTRANSFERASE"/>
    <property type="match status" value="1"/>
</dbReference>
<dbReference type="Pfam" id="PF02504">
    <property type="entry name" value="FA_synthesis"/>
    <property type="match status" value="1"/>
</dbReference>
<dbReference type="PIRSF" id="PIRSF002465">
    <property type="entry name" value="Phsphlp_syn_PlsX"/>
    <property type="match status" value="1"/>
</dbReference>
<dbReference type="SUPFAM" id="SSF53659">
    <property type="entry name" value="Isocitrate/Isopropylmalate dehydrogenase-like"/>
    <property type="match status" value="1"/>
</dbReference>
<name>PLSX_LEPIN</name>
<accession>Q8F6N9</accession>
<proteinExistence type="inferred from homology"/>
<sequence>MMWVAVDVMSGDYGPEKIIEGAVNAVNQDGANVVLVGKEEEIGEILLKFEYDTNKVRIQHASEIIDMNDSPSIAVRTLQDSSIVQATQIVADKTCVGMFSPGNTGATMASALLYLGRIPGVLRPPIAAPIPQENGPPMLLVDAGANVDCKPDYLAQFAVMGEIYSKLIFNILNPKVGILSNGEEDKKGNTVSLKAFEMIKKLPINFVGNVEGRDLYGSGKDVDVVVCDGFIGNIVLKATEGLSKSIFNVLRESIKQSSLAQTGALLLKPTLGAIKKRLDYAEYGGALLLGVDGICLIGHGSSNALAVQSAIRVAVECAQHQINDRIAADLKKYNI</sequence>
<evidence type="ECO:0000255" key="1">
    <source>
        <dbReference type="HAMAP-Rule" id="MF_00019"/>
    </source>
</evidence>
<keyword id="KW-0963">Cytoplasm</keyword>
<keyword id="KW-0444">Lipid biosynthesis</keyword>
<keyword id="KW-0443">Lipid metabolism</keyword>
<keyword id="KW-0594">Phospholipid biosynthesis</keyword>
<keyword id="KW-1208">Phospholipid metabolism</keyword>
<keyword id="KW-1185">Reference proteome</keyword>
<keyword id="KW-0808">Transferase</keyword>
<reference key="1">
    <citation type="journal article" date="2003" name="Nature">
        <title>Unique physiological and pathogenic features of Leptospira interrogans revealed by whole-genome sequencing.</title>
        <authorList>
            <person name="Ren S.-X."/>
            <person name="Fu G."/>
            <person name="Jiang X.-G."/>
            <person name="Zeng R."/>
            <person name="Miao Y.-G."/>
            <person name="Xu H."/>
            <person name="Zhang Y.-X."/>
            <person name="Xiong H."/>
            <person name="Lu G."/>
            <person name="Lu L.-F."/>
            <person name="Jiang H.-Q."/>
            <person name="Jia J."/>
            <person name="Tu Y.-F."/>
            <person name="Jiang J.-X."/>
            <person name="Gu W.-Y."/>
            <person name="Zhang Y.-Q."/>
            <person name="Cai Z."/>
            <person name="Sheng H.-H."/>
            <person name="Yin H.-F."/>
            <person name="Zhang Y."/>
            <person name="Zhu G.-F."/>
            <person name="Wan M."/>
            <person name="Huang H.-L."/>
            <person name="Qian Z."/>
            <person name="Wang S.-Y."/>
            <person name="Ma W."/>
            <person name="Yao Z.-J."/>
            <person name="Shen Y."/>
            <person name="Qiang B.-Q."/>
            <person name="Xia Q.-C."/>
            <person name="Guo X.-K."/>
            <person name="Danchin A."/>
            <person name="Saint Girons I."/>
            <person name="Somerville R.L."/>
            <person name="Wen Y.-M."/>
            <person name="Shi M.-H."/>
            <person name="Chen Z."/>
            <person name="Xu J.-G."/>
            <person name="Zhao G.-P."/>
        </authorList>
    </citation>
    <scope>NUCLEOTIDE SEQUENCE [LARGE SCALE GENOMIC DNA]</scope>
    <source>
        <strain>56601</strain>
    </source>
</reference>
<comment type="function">
    <text evidence="1">Catalyzes the reversible formation of acyl-phosphate (acyl-PO(4)) from acyl-[acyl-carrier-protein] (acyl-ACP). This enzyme utilizes acyl-ACP as fatty acyl donor, but not acyl-CoA.</text>
</comment>
<comment type="catalytic activity">
    <reaction evidence="1">
        <text>a fatty acyl-[ACP] + phosphate = an acyl phosphate + holo-[ACP]</text>
        <dbReference type="Rhea" id="RHEA:42292"/>
        <dbReference type="Rhea" id="RHEA-COMP:9685"/>
        <dbReference type="Rhea" id="RHEA-COMP:14125"/>
        <dbReference type="ChEBI" id="CHEBI:43474"/>
        <dbReference type="ChEBI" id="CHEBI:59918"/>
        <dbReference type="ChEBI" id="CHEBI:64479"/>
        <dbReference type="ChEBI" id="CHEBI:138651"/>
        <dbReference type="EC" id="2.3.1.274"/>
    </reaction>
</comment>
<comment type="pathway">
    <text evidence="1">Lipid metabolism; phospholipid metabolism.</text>
</comment>
<comment type="subunit">
    <text evidence="1">Homodimer. Probably interacts with PlsY.</text>
</comment>
<comment type="subcellular location">
    <subcellularLocation>
        <location evidence="1">Cytoplasm</location>
    </subcellularLocation>
    <text evidence="1">Associated with the membrane possibly through PlsY.</text>
</comment>
<comment type="similarity">
    <text evidence="1">Belongs to the PlsX family.</text>
</comment>
<gene>
    <name evidence="1" type="primary">plsX</name>
    <name type="ordered locus">LA_1264</name>
</gene>